<name>HLDD_ENT38</name>
<proteinExistence type="inferred from homology"/>
<organism>
    <name type="scientific">Enterobacter sp. (strain 638)</name>
    <dbReference type="NCBI Taxonomy" id="399742"/>
    <lineage>
        <taxon>Bacteria</taxon>
        <taxon>Pseudomonadati</taxon>
        <taxon>Pseudomonadota</taxon>
        <taxon>Gammaproteobacteria</taxon>
        <taxon>Enterobacterales</taxon>
        <taxon>Enterobacteriaceae</taxon>
        <taxon>Enterobacter</taxon>
    </lineage>
</organism>
<reference key="1">
    <citation type="journal article" date="2010" name="PLoS Genet.">
        <title>Genome sequence of the plant growth promoting endophytic bacterium Enterobacter sp. 638.</title>
        <authorList>
            <person name="Taghavi S."/>
            <person name="van der Lelie D."/>
            <person name="Hoffman A."/>
            <person name="Zhang Y.B."/>
            <person name="Walla M.D."/>
            <person name="Vangronsveld J."/>
            <person name="Newman L."/>
            <person name="Monchy S."/>
        </authorList>
    </citation>
    <scope>NUCLEOTIDE SEQUENCE [LARGE SCALE GENOMIC DNA]</scope>
    <source>
        <strain>638</strain>
    </source>
</reference>
<protein>
    <recommendedName>
        <fullName evidence="1">ADP-L-glycero-D-manno-heptose-6-epimerase</fullName>
        <ecNumber evidence="1">5.1.3.20</ecNumber>
    </recommendedName>
    <alternativeName>
        <fullName evidence="1">ADP-L-glycero-beta-D-manno-heptose-6-epimerase</fullName>
        <shortName evidence="1">ADP-glyceromanno-heptose 6-epimerase</shortName>
        <shortName evidence="1">ADP-hep 6-epimerase</shortName>
        <shortName evidence="1">AGME</shortName>
    </alternativeName>
</protein>
<keyword id="KW-0119">Carbohydrate metabolism</keyword>
<keyword id="KW-0413">Isomerase</keyword>
<keyword id="KW-0521">NADP</keyword>
<evidence type="ECO:0000255" key="1">
    <source>
        <dbReference type="HAMAP-Rule" id="MF_01601"/>
    </source>
</evidence>
<dbReference type="EC" id="5.1.3.20" evidence="1"/>
<dbReference type="EMBL" id="CP000653">
    <property type="protein sequence ID" value="ABP58807.1"/>
    <property type="molecule type" value="Genomic_DNA"/>
</dbReference>
<dbReference type="RefSeq" id="WP_011915383.1">
    <property type="nucleotide sequence ID" value="NC_009436.1"/>
</dbReference>
<dbReference type="SMR" id="A4W527"/>
<dbReference type="STRING" id="399742.Ent638_0117"/>
<dbReference type="KEGG" id="ent:Ent638_0117"/>
<dbReference type="eggNOG" id="COG0451">
    <property type="taxonomic scope" value="Bacteria"/>
</dbReference>
<dbReference type="HOGENOM" id="CLU_007383_1_3_6"/>
<dbReference type="OrthoDB" id="9803010at2"/>
<dbReference type="UniPathway" id="UPA00356">
    <property type="reaction ID" value="UER00440"/>
</dbReference>
<dbReference type="Proteomes" id="UP000000230">
    <property type="component" value="Chromosome"/>
</dbReference>
<dbReference type="GO" id="GO:0008712">
    <property type="term" value="F:ADP-glyceromanno-heptose 6-epimerase activity"/>
    <property type="evidence" value="ECO:0007669"/>
    <property type="project" value="UniProtKB-UniRule"/>
</dbReference>
<dbReference type="GO" id="GO:0050661">
    <property type="term" value="F:NADP binding"/>
    <property type="evidence" value="ECO:0007669"/>
    <property type="project" value="InterPro"/>
</dbReference>
<dbReference type="GO" id="GO:0097171">
    <property type="term" value="P:ADP-L-glycero-beta-D-manno-heptose biosynthetic process"/>
    <property type="evidence" value="ECO:0007669"/>
    <property type="project" value="UniProtKB-UniPathway"/>
</dbReference>
<dbReference type="GO" id="GO:0005975">
    <property type="term" value="P:carbohydrate metabolic process"/>
    <property type="evidence" value="ECO:0007669"/>
    <property type="project" value="UniProtKB-UniRule"/>
</dbReference>
<dbReference type="CDD" id="cd05248">
    <property type="entry name" value="ADP_GME_SDR_e"/>
    <property type="match status" value="1"/>
</dbReference>
<dbReference type="Gene3D" id="3.40.50.720">
    <property type="entry name" value="NAD(P)-binding Rossmann-like Domain"/>
    <property type="match status" value="1"/>
</dbReference>
<dbReference type="Gene3D" id="3.90.25.10">
    <property type="entry name" value="UDP-galactose 4-epimerase, domain 1"/>
    <property type="match status" value="1"/>
</dbReference>
<dbReference type="HAMAP" id="MF_01601">
    <property type="entry name" value="Heptose_epimerase"/>
    <property type="match status" value="1"/>
</dbReference>
<dbReference type="InterPro" id="IPR001509">
    <property type="entry name" value="Epimerase_deHydtase"/>
</dbReference>
<dbReference type="InterPro" id="IPR011912">
    <property type="entry name" value="Heptose_epim"/>
</dbReference>
<dbReference type="InterPro" id="IPR036291">
    <property type="entry name" value="NAD(P)-bd_dom_sf"/>
</dbReference>
<dbReference type="NCBIfam" id="TIGR02197">
    <property type="entry name" value="heptose_epim"/>
    <property type="match status" value="1"/>
</dbReference>
<dbReference type="NCBIfam" id="NF008360">
    <property type="entry name" value="PRK11150.1"/>
    <property type="match status" value="1"/>
</dbReference>
<dbReference type="PANTHER" id="PTHR43103:SF3">
    <property type="entry name" value="ADP-L-GLYCERO-D-MANNO-HEPTOSE-6-EPIMERASE"/>
    <property type="match status" value="1"/>
</dbReference>
<dbReference type="PANTHER" id="PTHR43103">
    <property type="entry name" value="NUCLEOSIDE-DIPHOSPHATE-SUGAR EPIMERASE"/>
    <property type="match status" value="1"/>
</dbReference>
<dbReference type="Pfam" id="PF01370">
    <property type="entry name" value="Epimerase"/>
    <property type="match status" value="1"/>
</dbReference>
<dbReference type="SUPFAM" id="SSF51735">
    <property type="entry name" value="NAD(P)-binding Rossmann-fold domains"/>
    <property type="match status" value="1"/>
</dbReference>
<comment type="function">
    <text evidence="1">Catalyzes the interconversion between ADP-D-glycero-beta-D-manno-heptose and ADP-L-glycero-beta-D-manno-heptose via an epimerization at carbon 6 of the heptose.</text>
</comment>
<comment type="catalytic activity">
    <reaction evidence="1">
        <text>ADP-D-glycero-beta-D-manno-heptose = ADP-L-glycero-beta-D-manno-heptose</text>
        <dbReference type="Rhea" id="RHEA:17577"/>
        <dbReference type="ChEBI" id="CHEBI:59967"/>
        <dbReference type="ChEBI" id="CHEBI:61506"/>
        <dbReference type="EC" id="5.1.3.20"/>
    </reaction>
</comment>
<comment type="cofactor">
    <cofactor evidence="1">
        <name>NADP(+)</name>
        <dbReference type="ChEBI" id="CHEBI:58349"/>
    </cofactor>
    <text evidence="1">Binds 1 NADP(+) per subunit.</text>
</comment>
<comment type="pathway">
    <text evidence="1">Nucleotide-sugar biosynthesis; ADP-L-glycero-beta-D-manno-heptose biosynthesis; ADP-L-glycero-beta-D-manno-heptose from D-glycero-beta-D-manno-heptose 7-phosphate: step 4/4.</text>
</comment>
<comment type="subunit">
    <text evidence="1">Homopentamer.</text>
</comment>
<comment type="domain">
    <text evidence="1">Contains a large N-terminal NADP-binding domain, and a smaller C-terminal substrate-binding domain.</text>
</comment>
<comment type="similarity">
    <text evidence="1">Belongs to the NAD(P)-dependent epimerase/dehydratase family. HldD subfamily.</text>
</comment>
<sequence>MIIVTGGAGFIGSNIIKALNDKGITDILVVDNLKDGTKFANLVDLNIADYMDKEDFLIQLMAGEEFGEIEAIFHEGACSSTTEWDGKYMMDNNYQYSKEVLHYCLEHEIPFLYASSAATYGGRTSDFIESREYEQPLNVYGYSKFLFDEYVRQILPEANSQIVGFRYFNVYGPREGHKGSMASVAFHLNTQLNNGETPKLFEGSDGFKRDFVYVGDVAAVNLWFWENGVSGIFNLGTGRAESFQAVADAALAFHKKDSLEYIPFPEKLKGRYQAFTQADLTNLRAAGYDKPFKTVAEGVAEYMAWLNRN</sequence>
<accession>A4W527</accession>
<gene>
    <name evidence="1" type="primary">hldD</name>
    <name type="ordered locus">Ent638_0117</name>
</gene>
<feature type="chain" id="PRO_1000069356" description="ADP-L-glycero-D-manno-heptose-6-epimerase">
    <location>
        <begin position="1"/>
        <end position="309"/>
    </location>
</feature>
<feature type="active site" description="Proton acceptor" evidence="1">
    <location>
        <position position="140"/>
    </location>
</feature>
<feature type="active site" description="Proton acceptor" evidence="1">
    <location>
        <position position="178"/>
    </location>
</feature>
<feature type="binding site" evidence="1">
    <location>
        <begin position="10"/>
        <end position="11"/>
    </location>
    <ligand>
        <name>NADP(+)</name>
        <dbReference type="ChEBI" id="CHEBI:58349"/>
    </ligand>
</feature>
<feature type="binding site" evidence="1">
    <location>
        <begin position="31"/>
        <end position="32"/>
    </location>
    <ligand>
        <name>NADP(+)</name>
        <dbReference type="ChEBI" id="CHEBI:58349"/>
    </ligand>
</feature>
<feature type="binding site" evidence="1">
    <location>
        <position position="38"/>
    </location>
    <ligand>
        <name>NADP(+)</name>
        <dbReference type="ChEBI" id="CHEBI:58349"/>
    </ligand>
</feature>
<feature type="binding site" evidence="1">
    <location>
        <position position="53"/>
    </location>
    <ligand>
        <name>NADP(+)</name>
        <dbReference type="ChEBI" id="CHEBI:58349"/>
    </ligand>
</feature>
<feature type="binding site" evidence="1">
    <location>
        <begin position="75"/>
        <end position="79"/>
    </location>
    <ligand>
        <name>NADP(+)</name>
        <dbReference type="ChEBI" id="CHEBI:58349"/>
    </ligand>
</feature>
<feature type="binding site" evidence="1">
    <location>
        <position position="92"/>
    </location>
    <ligand>
        <name>NADP(+)</name>
        <dbReference type="ChEBI" id="CHEBI:58349"/>
    </ligand>
</feature>
<feature type="binding site" evidence="1">
    <location>
        <position position="144"/>
    </location>
    <ligand>
        <name>NADP(+)</name>
        <dbReference type="ChEBI" id="CHEBI:58349"/>
    </ligand>
</feature>
<feature type="binding site" evidence="1">
    <location>
        <position position="169"/>
    </location>
    <ligand>
        <name>substrate</name>
    </ligand>
</feature>
<feature type="binding site" evidence="1">
    <location>
        <position position="170"/>
    </location>
    <ligand>
        <name>NADP(+)</name>
        <dbReference type="ChEBI" id="CHEBI:58349"/>
    </ligand>
</feature>
<feature type="binding site" evidence="1">
    <location>
        <position position="178"/>
    </location>
    <ligand>
        <name>NADP(+)</name>
        <dbReference type="ChEBI" id="CHEBI:58349"/>
    </ligand>
</feature>
<feature type="binding site" evidence="1">
    <location>
        <position position="180"/>
    </location>
    <ligand>
        <name>substrate</name>
    </ligand>
</feature>
<feature type="binding site" evidence="1">
    <location>
        <position position="187"/>
    </location>
    <ligand>
        <name>substrate</name>
    </ligand>
</feature>
<feature type="binding site" evidence="1">
    <location>
        <begin position="201"/>
        <end position="204"/>
    </location>
    <ligand>
        <name>substrate</name>
    </ligand>
</feature>
<feature type="binding site" evidence="1">
    <location>
        <position position="209"/>
    </location>
    <ligand>
        <name>substrate</name>
    </ligand>
</feature>
<feature type="binding site" evidence="1">
    <location>
        <position position="272"/>
    </location>
    <ligand>
        <name>substrate</name>
    </ligand>
</feature>